<accession>Q310Q2</accession>
<sequence>MQFSGALTAIVTPLKNGHIDEEAYRNLIEWQIEQGINGLVPCGTTGESATLSHEEHRDVIRICIDQVKGRVPVLAGAGSNSTKEACGLAQFAKDAGADGALLITPYYNKPTQEGLYQHFKAIAAEVSMPYIMYNVPGRTGVNMTSETVARVKRDVPEVVGIKEASANLKQVSEIIEFCGPDFQVLSGDDFTVLPLLSVGGCGVISVVSNIVPAKMSGLCKAFAGGDLARAKTLHHELSPLSRAMFCETNPIPVKTALSMMGRLSLELRLPLVPMQPQNEKYLRGILSLAGLV</sequence>
<name>DAPA_OLEA2</name>
<reference key="1">
    <citation type="journal article" date="2011" name="J. Bacteriol.">
        <title>Complete genome sequence and updated annotation of Desulfovibrio alaskensis G20.</title>
        <authorList>
            <person name="Hauser L.J."/>
            <person name="Land M.L."/>
            <person name="Brown S.D."/>
            <person name="Larimer F."/>
            <person name="Keller K.L."/>
            <person name="Rapp-Giles B.J."/>
            <person name="Price M.N."/>
            <person name="Lin M."/>
            <person name="Bruce D.C."/>
            <person name="Detter J.C."/>
            <person name="Tapia R."/>
            <person name="Han C.S."/>
            <person name="Goodwin L.A."/>
            <person name="Cheng J.F."/>
            <person name="Pitluck S."/>
            <person name="Copeland A."/>
            <person name="Lucas S."/>
            <person name="Nolan M."/>
            <person name="Lapidus A.L."/>
            <person name="Palumbo A.V."/>
            <person name="Wall J.D."/>
        </authorList>
    </citation>
    <scope>NUCLEOTIDE SEQUENCE [LARGE SCALE GENOMIC DNA]</scope>
    <source>
        <strain>ATCC BAA-1058 / DSM 17464 / G20</strain>
    </source>
</reference>
<feature type="chain" id="PRO_0000340946" description="4-hydroxy-tetrahydrodipicolinate synthase">
    <location>
        <begin position="1"/>
        <end position="292"/>
    </location>
</feature>
<feature type="active site" description="Proton donor/acceptor" evidence="1">
    <location>
        <position position="133"/>
    </location>
</feature>
<feature type="active site" description="Schiff-base intermediate with substrate" evidence="1">
    <location>
        <position position="162"/>
    </location>
</feature>
<feature type="binding site" evidence="1">
    <location>
        <position position="45"/>
    </location>
    <ligand>
        <name>pyruvate</name>
        <dbReference type="ChEBI" id="CHEBI:15361"/>
    </ligand>
</feature>
<feature type="binding site" evidence="1">
    <location>
        <position position="204"/>
    </location>
    <ligand>
        <name>pyruvate</name>
        <dbReference type="ChEBI" id="CHEBI:15361"/>
    </ligand>
</feature>
<feature type="site" description="Part of a proton relay during catalysis" evidence="1">
    <location>
        <position position="44"/>
    </location>
</feature>
<feature type="site" description="Part of a proton relay during catalysis" evidence="1">
    <location>
        <position position="107"/>
    </location>
</feature>
<dbReference type="EC" id="4.3.3.7" evidence="1"/>
<dbReference type="EMBL" id="CP000112">
    <property type="protein sequence ID" value="ABB38594.1"/>
    <property type="molecule type" value="Genomic_DNA"/>
</dbReference>
<dbReference type="RefSeq" id="WP_011367724.1">
    <property type="nucleotide sequence ID" value="NC_007519.1"/>
</dbReference>
<dbReference type="SMR" id="Q310Q2"/>
<dbReference type="STRING" id="207559.Dde_1797"/>
<dbReference type="KEGG" id="dde:Dde_1797"/>
<dbReference type="eggNOG" id="COG0329">
    <property type="taxonomic scope" value="Bacteria"/>
</dbReference>
<dbReference type="HOGENOM" id="CLU_049343_7_1_7"/>
<dbReference type="UniPathway" id="UPA00034">
    <property type="reaction ID" value="UER00017"/>
</dbReference>
<dbReference type="Proteomes" id="UP000002710">
    <property type="component" value="Chromosome"/>
</dbReference>
<dbReference type="GO" id="GO:0005829">
    <property type="term" value="C:cytosol"/>
    <property type="evidence" value="ECO:0007669"/>
    <property type="project" value="TreeGrafter"/>
</dbReference>
<dbReference type="GO" id="GO:0008840">
    <property type="term" value="F:4-hydroxy-tetrahydrodipicolinate synthase activity"/>
    <property type="evidence" value="ECO:0007669"/>
    <property type="project" value="UniProtKB-UniRule"/>
</dbReference>
<dbReference type="GO" id="GO:0019877">
    <property type="term" value="P:diaminopimelate biosynthetic process"/>
    <property type="evidence" value="ECO:0007669"/>
    <property type="project" value="UniProtKB-UniRule"/>
</dbReference>
<dbReference type="GO" id="GO:0009089">
    <property type="term" value="P:lysine biosynthetic process via diaminopimelate"/>
    <property type="evidence" value="ECO:0007669"/>
    <property type="project" value="UniProtKB-UniRule"/>
</dbReference>
<dbReference type="CDD" id="cd00950">
    <property type="entry name" value="DHDPS"/>
    <property type="match status" value="1"/>
</dbReference>
<dbReference type="Gene3D" id="3.20.20.70">
    <property type="entry name" value="Aldolase class I"/>
    <property type="match status" value="1"/>
</dbReference>
<dbReference type="HAMAP" id="MF_00418">
    <property type="entry name" value="DapA"/>
    <property type="match status" value="1"/>
</dbReference>
<dbReference type="InterPro" id="IPR013785">
    <property type="entry name" value="Aldolase_TIM"/>
</dbReference>
<dbReference type="InterPro" id="IPR005263">
    <property type="entry name" value="DapA"/>
</dbReference>
<dbReference type="InterPro" id="IPR002220">
    <property type="entry name" value="DapA-like"/>
</dbReference>
<dbReference type="InterPro" id="IPR020625">
    <property type="entry name" value="Schiff_base-form_aldolases_AS"/>
</dbReference>
<dbReference type="InterPro" id="IPR020624">
    <property type="entry name" value="Schiff_base-form_aldolases_CS"/>
</dbReference>
<dbReference type="NCBIfam" id="TIGR00674">
    <property type="entry name" value="dapA"/>
    <property type="match status" value="1"/>
</dbReference>
<dbReference type="PANTHER" id="PTHR12128:SF66">
    <property type="entry name" value="4-HYDROXY-2-OXOGLUTARATE ALDOLASE, MITOCHONDRIAL"/>
    <property type="match status" value="1"/>
</dbReference>
<dbReference type="PANTHER" id="PTHR12128">
    <property type="entry name" value="DIHYDRODIPICOLINATE SYNTHASE"/>
    <property type="match status" value="1"/>
</dbReference>
<dbReference type="Pfam" id="PF00701">
    <property type="entry name" value="DHDPS"/>
    <property type="match status" value="1"/>
</dbReference>
<dbReference type="PIRSF" id="PIRSF001365">
    <property type="entry name" value="DHDPS"/>
    <property type="match status" value="1"/>
</dbReference>
<dbReference type="PRINTS" id="PR00146">
    <property type="entry name" value="DHPICSNTHASE"/>
</dbReference>
<dbReference type="SMART" id="SM01130">
    <property type="entry name" value="DHDPS"/>
    <property type="match status" value="1"/>
</dbReference>
<dbReference type="SUPFAM" id="SSF51569">
    <property type="entry name" value="Aldolase"/>
    <property type="match status" value="1"/>
</dbReference>
<dbReference type="PROSITE" id="PS00665">
    <property type="entry name" value="DHDPS_1"/>
    <property type="match status" value="1"/>
</dbReference>
<dbReference type="PROSITE" id="PS00666">
    <property type="entry name" value="DHDPS_2"/>
    <property type="match status" value="1"/>
</dbReference>
<comment type="function">
    <text evidence="1">Catalyzes the condensation of (S)-aspartate-beta-semialdehyde [(S)-ASA] and pyruvate to 4-hydroxy-tetrahydrodipicolinate (HTPA).</text>
</comment>
<comment type="catalytic activity">
    <reaction evidence="1">
        <text>L-aspartate 4-semialdehyde + pyruvate = (2S,4S)-4-hydroxy-2,3,4,5-tetrahydrodipicolinate + H2O + H(+)</text>
        <dbReference type="Rhea" id="RHEA:34171"/>
        <dbReference type="ChEBI" id="CHEBI:15361"/>
        <dbReference type="ChEBI" id="CHEBI:15377"/>
        <dbReference type="ChEBI" id="CHEBI:15378"/>
        <dbReference type="ChEBI" id="CHEBI:67139"/>
        <dbReference type="ChEBI" id="CHEBI:537519"/>
        <dbReference type="EC" id="4.3.3.7"/>
    </reaction>
</comment>
<comment type="pathway">
    <text evidence="1">Amino-acid biosynthesis; L-lysine biosynthesis via DAP pathway; (S)-tetrahydrodipicolinate from L-aspartate: step 3/4.</text>
</comment>
<comment type="subunit">
    <text evidence="1">Homotetramer; dimer of dimers.</text>
</comment>
<comment type="subcellular location">
    <subcellularLocation>
        <location evidence="1">Cytoplasm</location>
    </subcellularLocation>
</comment>
<comment type="similarity">
    <text evidence="1">Belongs to the DapA family.</text>
</comment>
<comment type="caution">
    <text evidence="2">Was originally thought to be a dihydrodipicolinate synthase (DHDPS), catalyzing the condensation of (S)-aspartate-beta-semialdehyde [(S)-ASA] and pyruvate to dihydrodipicolinate (DHDP). However, it was shown in E.coli that the product of the enzymatic reaction is not dihydrodipicolinate but in fact (4S)-4-hydroxy-2,3,4,5-tetrahydro-(2S)-dipicolinic acid (HTPA), and that the consecutive dehydration reaction leading to DHDP is not spontaneous but catalyzed by DapB.</text>
</comment>
<proteinExistence type="inferred from homology"/>
<protein>
    <recommendedName>
        <fullName evidence="1">4-hydroxy-tetrahydrodipicolinate synthase</fullName>
        <shortName evidence="1">HTPA synthase</shortName>
        <ecNumber evidence="1">4.3.3.7</ecNumber>
    </recommendedName>
</protein>
<organism>
    <name type="scientific">Oleidesulfovibrio alaskensis (strain ATCC BAA-1058 / DSM 17464 / G20)</name>
    <name type="common">Desulfovibrio alaskensis</name>
    <dbReference type="NCBI Taxonomy" id="207559"/>
    <lineage>
        <taxon>Bacteria</taxon>
        <taxon>Pseudomonadati</taxon>
        <taxon>Thermodesulfobacteriota</taxon>
        <taxon>Desulfovibrionia</taxon>
        <taxon>Desulfovibrionales</taxon>
        <taxon>Desulfovibrionaceae</taxon>
        <taxon>Oleidesulfovibrio</taxon>
    </lineage>
</organism>
<gene>
    <name evidence="1" type="primary">dapA</name>
    <name type="ordered locus">Dde_1797</name>
</gene>
<keyword id="KW-0028">Amino-acid biosynthesis</keyword>
<keyword id="KW-0963">Cytoplasm</keyword>
<keyword id="KW-0220">Diaminopimelate biosynthesis</keyword>
<keyword id="KW-0456">Lyase</keyword>
<keyword id="KW-0457">Lysine biosynthesis</keyword>
<keyword id="KW-1185">Reference proteome</keyword>
<keyword id="KW-0704">Schiff base</keyword>
<evidence type="ECO:0000255" key="1">
    <source>
        <dbReference type="HAMAP-Rule" id="MF_00418"/>
    </source>
</evidence>
<evidence type="ECO:0000305" key="2"/>